<organism>
    <name type="scientific">Zea mays</name>
    <name type="common">Maize</name>
    <dbReference type="NCBI Taxonomy" id="4577"/>
    <lineage>
        <taxon>Eukaryota</taxon>
        <taxon>Viridiplantae</taxon>
        <taxon>Streptophyta</taxon>
        <taxon>Embryophyta</taxon>
        <taxon>Tracheophyta</taxon>
        <taxon>Spermatophyta</taxon>
        <taxon>Magnoliopsida</taxon>
        <taxon>Liliopsida</taxon>
        <taxon>Poales</taxon>
        <taxon>Poaceae</taxon>
        <taxon>PACMAD clade</taxon>
        <taxon>Panicoideae</taxon>
        <taxon>Andropogonodae</taxon>
        <taxon>Andropogoneae</taxon>
        <taxon>Tripsacinae</taxon>
        <taxon>Zea</taxon>
    </lineage>
</organism>
<feature type="chain" id="PRO_0000118602" description="NAD(P)H-quinone oxidoreductase subunit H, chloroplastic">
    <location>
        <begin position="1"/>
        <end position="393"/>
    </location>
</feature>
<gene>
    <name evidence="1" type="primary">ndhH</name>
</gene>
<protein>
    <recommendedName>
        <fullName evidence="1">NAD(P)H-quinone oxidoreductase subunit H, chloroplastic</fullName>
        <ecNumber evidence="1">7.1.1.-</ecNumber>
    </recommendedName>
    <alternativeName>
        <fullName>NAD(P)H dehydrogenase subunit H</fullName>
    </alternativeName>
    <alternativeName>
        <fullName evidence="1">NADH-plastoquinone oxidoreductase 49 kDa subunit</fullName>
    </alternativeName>
    <alternativeName>
        <fullName evidence="1">NADH-plastoquinone oxidoreductase subunit H</fullName>
    </alternativeName>
</protein>
<dbReference type="EC" id="7.1.1.-" evidence="1"/>
<dbReference type="EMBL" id="X56521">
    <property type="protein sequence ID" value="CAA39868.1"/>
    <property type="molecule type" value="Genomic_DNA"/>
</dbReference>
<dbReference type="EMBL" id="X86563">
    <property type="protein sequence ID" value="CAA60354.1"/>
    <property type="molecule type" value="Genomic_DNA"/>
</dbReference>
<dbReference type="PIR" id="S13600">
    <property type="entry name" value="S13600"/>
</dbReference>
<dbReference type="RefSeq" id="NP_043093.1">
    <property type="nucleotide sequence ID" value="NC_001666.2"/>
</dbReference>
<dbReference type="SMR" id="P25709"/>
<dbReference type="FunCoup" id="P25709">
    <property type="interactions" value="11"/>
</dbReference>
<dbReference type="STRING" id="4577.P25709"/>
<dbReference type="PaxDb" id="4577-GRMZM5G853723_P01"/>
<dbReference type="GeneID" id="845187"/>
<dbReference type="KEGG" id="zma:845187"/>
<dbReference type="MaizeGDB" id="69245"/>
<dbReference type="eggNOG" id="KOG2870">
    <property type="taxonomic scope" value="Eukaryota"/>
</dbReference>
<dbReference type="HOGENOM" id="CLU_015134_1_2_1"/>
<dbReference type="InParanoid" id="P25709"/>
<dbReference type="OMA" id="TRMDYLT"/>
<dbReference type="OrthoDB" id="722484at2759"/>
<dbReference type="Proteomes" id="UP000007305">
    <property type="component" value="Chloroplast"/>
</dbReference>
<dbReference type="GO" id="GO:0009535">
    <property type="term" value="C:chloroplast thylakoid membrane"/>
    <property type="evidence" value="ECO:0007669"/>
    <property type="project" value="UniProtKB-SubCell"/>
</dbReference>
<dbReference type="GO" id="GO:0051287">
    <property type="term" value="F:NAD binding"/>
    <property type="evidence" value="ECO:0007669"/>
    <property type="project" value="InterPro"/>
</dbReference>
<dbReference type="GO" id="GO:0016655">
    <property type="term" value="F:oxidoreductase activity, acting on NAD(P)H, quinone or similar compound as acceptor"/>
    <property type="evidence" value="ECO:0007669"/>
    <property type="project" value="UniProtKB-UniRule"/>
</dbReference>
<dbReference type="GO" id="GO:0048038">
    <property type="term" value="F:quinone binding"/>
    <property type="evidence" value="ECO:0007669"/>
    <property type="project" value="UniProtKB-KW"/>
</dbReference>
<dbReference type="GO" id="GO:0019684">
    <property type="term" value="P:photosynthesis, light reaction"/>
    <property type="evidence" value="ECO:0007669"/>
    <property type="project" value="UniProtKB-UniRule"/>
</dbReference>
<dbReference type="Gene3D" id="1.10.645.10">
    <property type="entry name" value="Cytochrome-c3 Hydrogenase, chain B"/>
    <property type="match status" value="1"/>
</dbReference>
<dbReference type="HAMAP" id="MF_01358">
    <property type="entry name" value="NDH1_NuoD"/>
    <property type="match status" value="1"/>
</dbReference>
<dbReference type="InterPro" id="IPR001135">
    <property type="entry name" value="NADH_Q_OxRdtase_suD"/>
</dbReference>
<dbReference type="InterPro" id="IPR014029">
    <property type="entry name" value="NADH_UbQ_OxRdtase_49kDa_CS"/>
</dbReference>
<dbReference type="InterPro" id="IPR022885">
    <property type="entry name" value="NDH1_su_D/H"/>
</dbReference>
<dbReference type="InterPro" id="IPR029014">
    <property type="entry name" value="NiFe-Hase_large"/>
</dbReference>
<dbReference type="NCBIfam" id="TIGR01962">
    <property type="entry name" value="NuoD"/>
    <property type="match status" value="1"/>
</dbReference>
<dbReference type="NCBIfam" id="NF004739">
    <property type="entry name" value="PRK06075.1"/>
    <property type="match status" value="1"/>
</dbReference>
<dbReference type="NCBIfam" id="NF005649">
    <property type="entry name" value="PRK07415.1"/>
    <property type="match status" value="1"/>
</dbReference>
<dbReference type="PANTHER" id="PTHR11993:SF10">
    <property type="entry name" value="NADH DEHYDROGENASE [UBIQUINONE] IRON-SULFUR PROTEIN 2, MITOCHONDRIAL"/>
    <property type="match status" value="1"/>
</dbReference>
<dbReference type="PANTHER" id="PTHR11993">
    <property type="entry name" value="NADH-UBIQUINONE OXIDOREDUCTASE 49 KDA SUBUNIT"/>
    <property type="match status" value="1"/>
</dbReference>
<dbReference type="Pfam" id="PF00346">
    <property type="entry name" value="Complex1_49kDa"/>
    <property type="match status" value="1"/>
</dbReference>
<dbReference type="SUPFAM" id="SSF56762">
    <property type="entry name" value="HydB/Nqo4-like"/>
    <property type="match status" value="1"/>
</dbReference>
<dbReference type="PROSITE" id="PS00535">
    <property type="entry name" value="COMPLEX1_49K"/>
    <property type="match status" value="1"/>
</dbReference>
<reference key="1">
    <citation type="journal article" date="1990" name="Curr. Genet.">
        <title>The ndhH genes of gramminean plastomes are linked with the junctions between small single copy and inverted repeat regions.</title>
        <authorList>
            <person name="Maier R.M."/>
            <person name="Doery I."/>
            <person name="Igloi G."/>
            <person name="Koessel H."/>
        </authorList>
    </citation>
    <scope>NUCLEOTIDE SEQUENCE [GENOMIC DNA]</scope>
</reference>
<reference key="2">
    <citation type="journal article" date="1995" name="J. Mol. Biol.">
        <title>Complete sequence of the maize chloroplast genome: gene content, hotspots of divergence and fine tuning of genetic information by transcript editing.</title>
        <authorList>
            <person name="Maier R.M."/>
            <person name="Neckermann K."/>
            <person name="Igloi G.L."/>
            <person name="Koessel H."/>
        </authorList>
    </citation>
    <scope>NUCLEOTIDE SEQUENCE [LARGE SCALE GENOMIC DNA]</scope>
    <source>
        <strain>cv. B73</strain>
    </source>
</reference>
<evidence type="ECO:0000255" key="1">
    <source>
        <dbReference type="HAMAP-Rule" id="MF_01358"/>
    </source>
</evidence>
<sequence length="393" mass="45687">MSLSLKRKDLMIVNMGPQHPSMHGVLRLIVTLDGEDVIDCEPILGYLHRGMEKIAENRSIIQYLPYVTRWDYLATMFTEAITVNAPEFLENIQIPKRASYIRVIMLELSRIASHLLWLGPFMADLGAQTPFFYIFRERELIYDLFEAVTGMRMMHNYFRIGGVAADLPYGWMDKCLDFCDYFLQGVVEYQELITQNPIFLERVEGVGFISGEEAVNWGLSGPMLRASGIQWDLRKIDPYESYNQFDWKVQWQKEGDSLARYLVRVGEMRESIKIIQQAVEKIPGGPYENLEARRFKKAKNPEWNDFEYRFLGKKPSPNFELSKQELYVRVEAPKGELGIYLVGDDSLFPWRWKIRPPGFINLQILPQLVKKMKLADIMTILGSIDIIMGEVDR</sequence>
<keyword id="KW-0150">Chloroplast</keyword>
<keyword id="KW-0472">Membrane</keyword>
<keyword id="KW-0520">NAD</keyword>
<keyword id="KW-0521">NADP</keyword>
<keyword id="KW-0934">Plastid</keyword>
<keyword id="KW-0618">Plastoquinone</keyword>
<keyword id="KW-0874">Quinone</keyword>
<keyword id="KW-1185">Reference proteome</keyword>
<keyword id="KW-0793">Thylakoid</keyword>
<keyword id="KW-1278">Translocase</keyword>
<keyword id="KW-0813">Transport</keyword>
<name>NDHH_MAIZE</name>
<accession>P25709</accession>
<geneLocation type="chloroplast"/>
<proteinExistence type="inferred from homology"/>
<comment type="function">
    <text evidence="1">NDH shuttles electrons from NAD(P)H:plastoquinone, via FMN and iron-sulfur (Fe-S) centers, to quinones in the photosynthetic chain and possibly in a chloroplast respiratory chain. The immediate electron acceptor for the enzyme in this species is believed to be plastoquinone. Couples the redox reaction to proton translocation, and thus conserves the redox energy in a proton gradient.</text>
</comment>
<comment type="catalytic activity">
    <reaction evidence="1">
        <text>a plastoquinone + NADH + (n+1) H(+)(in) = a plastoquinol + NAD(+) + n H(+)(out)</text>
        <dbReference type="Rhea" id="RHEA:42608"/>
        <dbReference type="Rhea" id="RHEA-COMP:9561"/>
        <dbReference type="Rhea" id="RHEA-COMP:9562"/>
        <dbReference type="ChEBI" id="CHEBI:15378"/>
        <dbReference type="ChEBI" id="CHEBI:17757"/>
        <dbReference type="ChEBI" id="CHEBI:57540"/>
        <dbReference type="ChEBI" id="CHEBI:57945"/>
        <dbReference type="ChEBI" id="CHEBI:62192"/>
    </reaction>
</comment>
<comment type="catalytic activity">
    <reaction evidence="1">
        <text>a plastoquinone + NADPH + (n+1) H(+)(in) = a plastoquinol + NADP(+) + n H(+)(out)</text>
        <dbReference type="Rhea" id="RHEA:42612"/>
        <dbReference type="Rhea" id="RHEA-COMP:9561"/>
        <dbReference type="Rhea" id="RHEA-COMP:9562"/>
        <dbReference type="ChEBI" id="CHEBI:15378"/>
        <dbReference type="ChEBI" id="CHEBI:17757"/>
        <dbReference type="ChEBI" id="CHEBI:57783"/>
        <dbReference type="ChEBI" id="CHEBI:58349"/>
        <dbReference type="ChEBI" id="CHEBI:62192"/>
    </reaction>
</comment>
<comment type="subunit">
    <text evidence="1">NDH is composed of at least 16 different subunits, 5 of which are encoded in the nucleus.</text>
</comment>
<comment type="subcellular location">
    <subcellularLocation>
        <location evidence="1">Plastid</location>
        <location evidence="1">Chloroplast thylakoid membrane</location>
        <topology evidence="1">Peripheral membrane protein</topology>
        <orientation evidence="1">Stromal side</orientation>
    </subcellularLocation>
</comment>
<comment type="similarity">
    <text evidence="1">Belongs to the complex I 49 kDa subunit family.</text>
</comment>